<keyword id="KW-1003">Cell membrane</keyword>
<keyword id="KW-0963">Cytoplasm</keyword>
<keyword id="KW-0472">Membrane</keyword>
<keyword id="KW-1185">Reference proteome</keyword>
<keyword id="KW-0812">Transmembrane</keyword>
<keyword id="KW-1133">Transmembrane helix</keyword>
<evidence type="ECO:0000255" key="1"/>
<evidence type="ECO:0000256" key="2">
    <source>
        <dbReference type="SAM" id="MobiDB-lite"/>
    </source>
</evidence>
<evidence type="ECO:0000269" key="3">
    <source>
    </source>
</evidence>
<evidence type="ECO:0000303" key="4">
    <source>
    </source>
</evidence>
<evidence type="ECO:0000303" key="5">
    <source>
    </source>
</evidence>
<evidence type="ECO:0000305" key="6"/>
<evidence type="ECO:0000312" key="7">
    <source>
        <dbReference type="Araport" id="AT3G49845"/>
    </source>
</evidence>
<evidence type="ECO:0000312" key="8">
    <source>
        <dbReference type="EMBL" id="CAB66922.1"/>
    </source>
</evidence>
<comment type="function">
    <text evidence="5">Involved in resistance to abiotic stress.</text>
</comment>
<comment type="subunit">
    <text evidence="3">Heterodimers (PubMed:29272523). Interacts with CYSTM7 and WIH1/CYSTM13 (PubMed:29272523).</text>
</comment>
<comment type="subcellular location">
    <subcellularLocation>
        <location evidence="3">Cell membrane</location>
        <topology evidence="1">Single-pass membrane protein</topology>
    </subcellularLocation>
    <subcellularLocation>
        <location evidence="3">Cytoplasm</location>
    </subcellularLocation>
</comment>
<comment type="tissue specificity">
    <text evidence="3">Mostly expressed in stems and,at low levels, in stems, roots, flowers, siliques and leaves.</text>
</comment>
<comment type="induction">
    <text evidence="3">Induced by heat and oxidation stress in shoots (PubMed:29272523). Induced in roots in response to cold and salt (PubMed:29272523).</text>
</comment>
<comment type="similarity">
    <text evidence="6">Belongs to the CYSTM1 family.</text>
</comment>
<comment type="sequence caution" evidence="6">
    <conflict type="erroneous gene model prediction">
        <sequence resource="EMBL-CDS" id="CAB66922"/>
    </conflict>
</comment>
<protein>
    <recommendedName>
        <fullName evidence="5">Protein CYSTEINE-RICH TRANSMEMBRANE MODULE 10</fullName>
        <shortName evidence="5">AthCYSTM10</shortName>
    </recommendedName>
    <alternativeName>
        <fullName evidence="4">Protein WINDHOSE 3</fullName>
    </alternativeName>
</protein>
<name>CST10_ARATH</name>
<organism>
    <name type="scientific">Arabidopsis thaliana</name>
    <name type="common">Mouse-ear cress</name>
    <dbReference type="NCBI Taxonomy" id="3702"/>
    <lineage>
        <taxon>Eukaryota</taxon>
        <taxon>Viridiplantae</taxon>
        <taxon>Streptophyta</taxon>
        <taxon>Embryophyta</taxon>
        <taxon>Tracheophyta</taxon>
        <taxon>Spermatophyta</taxon>
        <taxon>Magnoliopsida</taxon>
        <taxon>eudicotyledons</taxon>
        <taxon>Gunneridae</taxon>
        <taxon>Pentapetalae</taxon>
        <taxon>rosids</taxon>
        <taxon>malvids</taxon>
        <taxon>Brassicales</taxon>
        <taxon>Brassicaceae</taxon>
        <taxon>Camelineae</taxon>
        <taxon>Arabidopsis</taxon>
    </lineage>
</organism>
<dbReference type="EMBL" id="AL132965">
    <property type="protein sequence ID" value="CAB66922.1"/>
    <property type="status" value="ALT_SEQ"/>
    <property type="molecule type" value="Genomic_DNA"/>
</dbReference>
<dbReference type="EMBL" id="CP002686">
    <property type="protein sequence ID" value="AEE78597.1"/>
    <property type="molecule type" value="Genomic_DNA"/>
</dbReference>
<dbReference type="EMBL" id="AK228923">
    <property type="protein sequence ID" value="BAF00812.1"/>
    <property type="molecule type" value="mRNA"/>
</dbReference>
<dbReference type="PIR" id="T46050">
    <property type="entry name" value="T46050"/>
</dbReference>
<dbReference type="RefSeq" id="NP_001118805.1">
    <property type="nucleotide sequence ID" value="NM_001125333.2"/>
</dbReference>
<dbReference type="STRING" id="3702.F4IZ80"/>
<dbReference type="PaxDb" id="3702-AT3G49845.1"/>
<dbReference type="ProteomicsDB" id="201786"/>
<dbReference type="EnsemblPlants" id="AT3G49845.1">
    <property type="protein sequence ID" value="AT3G49845.1"/>
    <property type="gene ID" value="AT3G49845"/>
</dbReference>
<dbReference type="GeneID" id="6240705"/>
<dbReference type="Gramene" id="AT3G49845.1">
    <property type="protein sequence ID" value="AT3G49845.1"/>
    <property type="gene ID" value="AT3G49845"/>
</dbReference>
<dbReference type="KEGG" id="ath:AT3G49845"/>
<dbReference type="Araport" id="AT3G49845"/>
<dbReference type="TAIR" id="AT3G49845">
    <property type="gene designation" value="WIH3"/>
</dbReference>
<dbReference type="HOGENOM" id="CLU_128451_1_0_1"/>
<dbReference type="InParanoid" id="F4IZ80"/>
<dbReference type="OMA" id="GNPKGHI"/>
<dbReference type="PRO" id="PR:F4IZ80"/>
<dbReference type="Proteomes" id="UP000006548">
    <property type="component" value="Chromosome 3"/>
</dbReference>
<dbReference type="ExpressionAtlas" id="F4IZ80">
    <property type="expression patterns" value="baseline and differential"/>
</dbReference>
<dbReference type="GO" id="GO:0005737">
    <property type="term" value="C:cytoplasm"/>
    <property type="evidence" value="ECO:0000314"/>
    <property type="project" value="UniProtKB"/>
</dbReference>
<dbReference type="GO" id="GO:0005634">
    <property type="term" value="C:nucleus"/>
    <property type="evidence" value="ECO:0000314"/>
    <property type="project" value="TAIR"/>
</dbReference>
<dbReference type="GO" id="GO:0005886">
    <property type="term" value="C:plasma membrane"/>
    <property type="evidence" value="ECO:0000314"/>
    <property type="project" value="UniProtKB"/>
</dbReference>
<dbReference type="InterPro" id="IPR028144">
    <property type="entry name" value="CYSTM_dom"/>
</dbReference>
<dbReference type="Pfam" id="PF12734">
    <property type="entry name" value="CYSTM"/>
    <property type="match status" value="1"/>
</dbReference>
<accession>F4IZ80</accession>
<accession>A0A178VFW8</accession>
<accession>Q0WPY7</accession>
<accession>Q9M2X4</accession>
<sequence>MSYQDPQHPVSAPPPQGYPPKEGYPPAGYPPPAGYPPPQYPQAGYPPAGYPPPQQGYGQGYPAQGYPPPQYPQGHPPQYPYQGPPPPHYGQAPPKNKKDKKDSGGFMEGCLAMLCCCVLLEACF</sequence>
<proteinExistence type="evidence at protein level"/>
<feature type="chain" id="PRO_0000454807" description="Protein CYSTEINE-RICH TRANSMEMBRANE MODULE 10">
    <location>
        <begin position="1"/>
        <end position="124"/>
    </location>
</feature>
<feature type="transmembrane region" description="Helical" evidence="1">
    <location>
        <begin position="101"/>
        <end position="118"/>
    </location>
</feature>
<feature type="region of interest" description="Disordered" evidence="2">
    <location>
        <begin position="1"/>
        <end position="103"/>
    </location>
</feature>
<feature type="compositionally biased region" description="Pro residues" evidence="2">
    <location>
        <begin position="27"/>
        <end position="40"/>
    </location>
</feature>
<feature type="compositionally biased region" description="Pro residues" evidence="2">
    <location>
        <begin position="65"/>
        <end position="88"/>
    </location>
</feature>
<gene>
    <name evidence="5" type="primary">CYSTM10</name>
    <name evidence="4" type="synonym">WIH3</name>
    <name evidence="7" type="ordered locus">At3g49845</name>
    <name evidence="8" type="ORF">T16K5.190</name>
</gene>
<reference key="1">
    <citation type="journal article" date="2000" name="Nature">
        <title>Sequence and analysis of chromosome 3 of the plant Arabidopsis thaliana.</title>
        <authorList>
            <person name="Salanoubat M."/>
            <person name="Lemcke K."/>
            <person name="Rieger M."/>
            <person name="Ansorge W."/>
            <person name="Unseld M."/>
            <person name="Fartmann B."/>
            <person name="Valle G."/>
            <person name="Bloecker H."/>
            <person name="Perez-Alonso M."/>
            <person name="Obermaier B."/>
            <person name="Delseny M."/>
            <person name="Boutry M."/>
            <person name="Grivell L.A."/>
            <person name="Mache R."/>
            <person name="Puigdomenech P."/>
            <person name="De Simone V."/>
            <person name="Choisne N."/>
            <person name="Artiguenave F."/>
            <person name="Robert C."/>
            <person name="Brottier P."/>
            <person name="Wincker P."/>
            <person name="Cattolico L."/>
            <person name="Weissenbach J."/>
            <person name="Saurin W."/>
            <person name="Quetier F."/>
            <person name="Schaefer M."/>
            <person name="Mueller-Auer S."/>
            <person name="Gabel C."/>
            <person name="Fuchs M."/>
            <person name="Benes V."/>
            <person name="Wurmbach E."/>
            <person name="Drzonek H."/>
            <person name="Erfle H."/>
            <person name="Jordan N."/>
            <person name="Bangert S."/>
            <person name="Wiedelmann R."/>
            <person name="Kranz H."/>
            <person name="Voss H."/>
            <person name="Holland R."/>
            <person name="Brandt P."/>
            <person name="Nyakatura G."/>
            <person name="Vezzi A."/>
            <person name="D'Angelo M."/>
            <person name="Pallavicini A."/>
            <person name="Toppo S."/>
            <person name="Simionati B."/>
            <person name="Conrad A."/>
            <person name="Hornischer K."/>
            <person name="Kauer G."/>
            <person name="Loehnert T.-H."/>
            <person name="Nordsiek G."/>
            <person name="Reichelt J."/>
            <person name="Scharfe M."/>
            <person name="Schoen O."/>
            <person name="Bargues M."/>
            <person name="Terol J."/>
            <person name="Climent J."/>
            <person name="Navarro P."/>
            <person name="Collado C."/>
            <person name="Perez-Perez A."/>
            <person name="Ottenwaelder B."/>
            <person name="Duchemin D."/>
            <person name="Cooke R."/>
            <person name="Laudie M."/>
            <person name="Berger-Llauro C."/>
            <person name="Purnelle B."/>
            <person name="Masuy D."/>
            <person name="de Haan M."/>
            <person name="Maarse A.C."/>
            <person name="Alcaraz J.-P."/>
            <person name="Cottet A."/>
            <person name="Casacuberta E."/>
            <person name="Monfort A."/>
            <person name="Argiriou A."/>
            <person name="Flores M."/>
            <person name="Liguori R."/>
            <person name="Vitale D."/>
            <person name="Mannhaupt G."/>
            <person name="Haase D."/>
            <person name="Schoof H."/>
            <person name="Rudd S."/>
            <person name="Zaccaria P."/>
            <person name="Mewes H.-W."/>
            <person name="Mayer K.F.X."/>
            <person name="Kaul S."/>
            <person name="Town C.D."/>
            <person name="Koo H.L."/>
            <person name="Tallon L.J."/>
            <person name="Jenkins J."/>
            <person name="Rooney T."/>
            <person name="Rizzo M."/>
            <person name="Walts A."/>
            <person name="Utterback T."/>
            <person name="Fujii C.Y."/>
            <person name="Shea T.P."/>
            <person name="Creasy T.H."/>
            <person name="Haas B."/>
            <person name="Maiti R."/>
            <person name="Wu D."/>
            <person name="Peterson J."/>
            <person name="Van Aken S."/>
            <person name="Pai G."/>
            <person name="Militscher J."/>
            <person name="Sellers P."/>
            <person name="Gill J.E."/>
            <person name="Feldblyum T.V."/>
            <person name="Preuss D."/>
            <person name="Lin X."/>
            <person name="Nierman W.C."/>
            <person name="Salzberg S.L."/>
            <person name="White O."/>
            <person name="Venter J.C."/>
            <person name="Fraser C.M."/>
            <person name="Kaneko T."/>
            <person name="Nakamura Y."/>
            <person name="Sato S."/>
            <person name="Kato T."/>
            <person name="Asamizu E."/>
            <person name="Sasamoto S."/>
            <person name="Kimura T."/>
            <person name="Idesawa K."/>
            <person name="Kawashima K."/>
            <person name="Kishida Y."/>
            <person name="Kiyokawa C."/>
            <person name="Kohara M."/>
            <person name="Matsumoto M."/>
            <person name="Matsuno A."/>
            <person name="Muraki A."/>
            <person name="Nakayama S."/>
            <person name="Nakazaki N."/>
            <person name="Shinpo S."/>
            <person name="Takeuchi C."/>
            <person name="Wada T."/>
            <person name="Watanabe A."/>
            <person name="Yamada M."/>
            <person name="Yasuda M."/>
            <person name="Tabata S."/>
        </authorList>
    </citation>
    <scope>NUCLEOTIDE SEQUENCE [LARGE SCALE GENOMIC DNA]</scope>
    <source>
        <strain>cv. Columbia</strain>
    </source>
</reference>
<reference key="2">
    <citation type="journal article" date="2017" name="Plant J.">
        <title>Araport11: a complete reannotation of the Arabidopsis thaliana reference genome.</title>
        <authorList>
            <person name="Cheng C.Y."/>
            <person name="Krishnakumar V."/>
            <person name="Chan A.P."/>
            <person name="Thibaud-Nissen F."/>
            <person name="Schobel S."/>
            <person name="Town C.D."/>
        </authorList>
    </citation>
    <scope>GENOME REANNOTATION</scope>
    <source>
        <strain>cv. Columbia</strain>
    </source>
</reference>
<reference key="3">
    <citation type="submission" date="2006-07" db="EMBL/GenBank/DDBJ databases">
        <title>Large-scale analysis of RIKEN Arabidopsis full-length (RAFL) cDNAs.</title>
        <authorList>
            <person name="Totoki Y."/>
            <person name="Seki M."/>
            <person name="Ishida J."/>
            <person name="Nakajima M."/>
            <person name="Enju A."/>
            <person name="Kamiya A."/>
            <person name="Narusaka M."/>
            <person name="Shin-i T."/>
            <person name="Nakagawa M."/>
            <person name="Sakamoto N."/>
            <person name="Oishi K."/>
            <person name="Kohara Y."/>
            <person name="Kobayashi M."/>
            <person name="Toyoda A."/>
            <person name="Sakaki Y."/>
            <person name="Sakurai T."/>
            <person name="Iida K."/>
            <person name="Akiyama K."/>
            <person name="Satou M."/>
            <person name="Toyoda T."/>
            <person name="Konagaya A."/>
            <person name="Carninci P."/>
            <person name="Kawai J."/>
            <person name="Hayashizaki Y."/>
            <person name="Shinozaki K."/>
        </authorList>
    </citation>
    <scope>NUCLEOTIDE SEQUENCE [LARGE SCALE MRNA] OF 14-124</scope>
    <source>
        <strain>cv. Columbia</strain>
    </source>
</reference>
<reference key="4">
    <citation type="journal article" date="2011" name="Curr. Biol.">
        <title>Arabidopsis WIH1 and WIH2 genes act in the transition from somatic to reproductive cell fate.</title>
        <authorList>
            <person name="Lieber D."/>
            <person name="Lora J."/>
            <person name="Schrempp S."/>
            <person name="Lenhard M."/>
            <person name="Laux T."/>
        </authorList>
    </citation>
    <scope>GENE FAMILY</scope>
</reference>
<reference key="5">
    <citation type="journal article" date="2018" name="Plant Cell Physiol.">
        <title>CYSTM, a novel non-secreted cysteine-rich peptide family, involved in environmental stresses in Arabidopsis thaliana.</title>
        <authorList>
            <person name="Xu Y."/>
            <person name="Yu Z."/>
            <person name="Zhang D."/>
            <person name="Huang J."/>
            <person name="Wu C."/>
            <person name="Yang G."/>
            <person name="Yan K."/>
            <person name="Zhang S."/>
            <person name="Zheng C."/>
        </authorList>
    </citation>
    <scope>FUNCTION</scope>
    <scope>INTERACTION WITH CYSTM7 AND WIH1/CYSTM13</scope>
    <scope>TISSUE SPECIFICITY</scope>
    <scope>INDUCTION BY SALT; HEAT; COLD AND OXIDATION</scope>
    <scope>SUBCELLULAR LOCATION</scope>
    <source>
        <strain>cv. Columbia</strain>
    </source>
</reference>